<reference key="1">
    <citation type="journal article" date="2009" name="Environ. Microbiol.">
        <title>The genome of Polaromonas naphthalenivorans strain CJ2, isolated from coal tar-contaminated sediment, reveals physiological and metabolic versatility and evolution through extensive horizontal gene transfer.</title>
        <authorList>
            <person name="Yagi J.M."/>
            <person name="Sims D."/>
            <person name="Brettin T."/>
            <person name="Bruce D."/>
            <person name="Madsen E.L."/>
        </authorList>
    </citation>
    <scope>NUCLEOTIDE SEQUENCE [LARGE SCALE GENOMIC DNA]</scope>
    <source>
        <strain>CJ2</strain>
    </source>
</reference>
<accession>A1VR75</accession>
<name>RL35_POLNA</name>
<feature type="chain" id="PRO_1000050737" description="Large ribosomal subunit protein bL35">
    <location>
        <begin position="1"/>
        <end position="67"/>
    </location>
</feature>
<feature type="region of interest" description="Disordered" evidence="2">
    <location>
        <begin position="1"/>
        <end position="24"/>
    </location>
</feature>
<feature type="compositionally biased region" description="Basic residues" evidence="2">
    <location>
        <begin position="1"/>
        <end position="16"/>
    </location>
</feature>
<proteinExistence type="inferred from homology"/>
<sequence>MPKMKTKSGAKKRFRVRPGGTVKRGQAFKRHILTKKTTKNKRQLRGSVAVHETNMGHMAQMLPGRGI</sequence>
<organism>
    <name type="scientific">Polaromonas naphthalenivorans (strain CJ2)</name>
    <dbReference type="NCBI Taxonomy" id="365044"/>
    <lineage>
        <taxon>Bacteria</taxon>
        <taxon>Pseudomonadati</taxon>
        <taxon>Pseudomonadota</taxon>
        <taxon>Betaproteobacteria</taxon>
        <taxon>Burkholderiales</taxon>
        <taxon>Comamonadaceae</taxon>
        <taxon>Polaromonas</taxon>
    </lineage>
</organism>
<protein>
    <recommendedName>
        <fullName evidence="1">Large ribosomal subunit protein bL35</fullName>
    </recommendedName>
    <alternativeName>
        <fullName evidence="3">50S ribosomal protein L35</fullName>
    </alternativeName>
</protein>
<comment type="similarity">
    <text evidence="1">Belongs to the bacterial ribosomal protein bL35 family.</text>
</comment>
<dbReference type="EMBL" id="CP000529">
    <property type="protein sequence ID" value="ABM38153.1"/>
    <property type="molecule type" value="Genomic_DNA"/>
</dbReference>
<dbReference type="RefSeq" id="WP_011802230.1">
    <property type="nucleotide sequence ID" value="NC_008781.1"/>
</dbReference>
<dbReference type="SMR" id="A1VR75"/>
<dbReference type="STRING" id="365044.Pnap_2852"/>
<dbReference type="KEGG" id="pna:Pnap_2852"/>
<dbReference type="eggNOG" id="COG0291">
    <property type="taxonomic scope" value="Bacteria"/>
</dbReference>
<dbReference type="HOGENOM" id="CLU_169643_1_0_4"/>
<dbReference type="OrthoDB" id="47476at2"/>
<dbReference type="Proteomes" id="UP000000644">
    <property type="component" value="Chromosome"/>
</dbReference>
<dbReference type="GO" id="GO:0022625">
    <property type="term" value="C:cytosolic large ribosomal subunit"/>
    <property type="evidence" value="ECO:0007669"/>
    <property type="project" value="TreeGrafter"/>
</dbReference>
<dbReference type="GO" id="GO:0003735">
    <property type="term" value="F:structural constituent of ribosome"/>
    <property type="evidence" value="ECO:0007669"/>
    <property type="project" value="InterPro"/>
</dbReference>
<dbReference type="GO" id="GO:0006412">
    <property type="term" value="P:translation"/>
    <property type="evidence" value="ECO:0007669"/>
    <property type="project" value="UniProtKB-UniRule"/>
</dbReference>
<dbReference type="FunFam" id="4.10.410.60:FF:000001">
    <property type="entry name" value="50S ribosomal protein L35"/>
    <property type="match status" value="1"/>
</dbReference>
<dbReference type="Gene3D" id="4.10.410.60">
    <property type="match status" value="1"/>
</dbReference>
<dbReference type="HAMAP" id="MF_00514">
    <property type="entry name" value="Ribosomal_bL35"/>
    <property type="match status" value="1"/>
</dbReference>
<dbReference type="InterPro" id="IPR001706">
    <property type="entry name" value="Ribosomal_bL35"/>
</dbReference>
<dbReference type="InterPro" id="IPR021137">
    <property type="entry name" value="Ribosomal_bL35-like"/>
</dbReference>
<dbReference type="InterPro" id="IPR018265">
    <property type="entry name" value="Ribosomal_bL35_CS"/>
</dbReference>
<dbReference type="InterPro" id="IPR037229">
    <property type="entry name" value="Ribosomal_bL35_sf"/>
</dbReference>
<dbReference type="NCBIfam" id="TIGR00001">
    <property type="entry name" value="rpmI_bact"/>
    <property type="match status" value="1"/>
</dbReference>
<dbReference type="PANTHER" id="PTHR33343">
    <property type="entry name" value="54S RIBOSOMAL PROTEIN BL35M"/>
    <property type="match status" value="1"/>
</dbReference>
<dbReference type="PANTHER" id="PTHR33343:SF1">
    <property type="entry name" value="LARGE RIBOSOMAL SUBUNIT PROTEIN BL35M"/>
    <property type="match status" value="1"/>
</dbReference>
<dbReference type="Pfam" id="PF01632">
    <property type="entry name" value="Ribosomal_L35p"/>
    <property type="match status" value="1"/>
</dbReference>
<dbReference type="PRINTS" id="PR00064">
    <property type="entry name" value="RIBOSOMALL35"/>
</dbReference>
<dbReference type="SUPFAM" id="SSF143034">
    <property type="entry name" value="L35p-like"/>
    <property type="match status" value="1"/>
</dbReference>
<dbReference type="PROSITE" id="PS00936">
    <property type="entry name" value="RIBOSOMAL_L35"/>
    <property type="match status" value="1"/>
</dbReference>
<gene>
    <name evidence="1" type="primary">rpmI</name>
    <name type="ordered locus">Pnap_2852</name>
</gene>
<keyword id="KW-1185">Reference proteome</keyword>
<keyword id="KW-0687">Ribonucleoprotein</keyword>
<keyword id="KW-0689">Ribosomal protein</keyword>
<evidence type="ECO:0000255" key="1">
    <source>
        <dbReference type="HAMAP-Rule" id="MF_00514"/>
    </source>
</evidence>
<evidence type="ECO:0000256" key="2">
    <source>
        <dbReference type="SAM" id="MobiDB-lite"/>
    </source>
</evidence>
<evidence type="ECO:0000305" key="3"/>